<dbReference type="EMBL" id="AY653733">
    <property type="protein sequence ID" value="AAV50556.1"/>
    <property type="molecule type" value="Genomic_DNA"/>
</dbReference>
<dbReference type="SMR" id="Q5UPW3"/>
<dbReference type="KEGG" id="vg:9924899"/>
<dbReference type="OrthoDB" id="35842at10239"/>
<dbReference type="Proteomes" id="UP000001134">
    <property type="component" value="Genome"/>
</dbReference>
<dbReference type="InterPro" id="IPR036770">
    <property type="entry name" value="Ankyrin_rpt-contain_sf"/>
</dbReference>
<dbReference type="SUPFAM" id="SSF48403">
    <property type="entry name" value="Ankyrin repeat"/>
    <property type="match status" value="1"/>
</dbReference>
<reference key="1">
    <citation type="journal article" date="2004" name="Science">
        <title>The 1.2-megabase genome sequence of Mimivirus.</title>
        <authorList>
            <person name="Raoult D."/>
            <person name="Audic S."/>
            <person name="Robert C."/>
            <person name="Abergel C."/>
            <person name="Renesto P."/>
            <person name="Ogata H."/>
            <person name="La Scola B."/>
            <person name="Susan M."/>
            <person name="Claverie J.-M."/>
        </authorList>
    </citation>
    <scope>NUCLEOTIDE SEQUENCE [LARGE SCALE GENOMIC DNA]</scope>
    <source>
        <strain>Rowbotham-Bradford</strain>
    </source>
</reference>
<organismHost>
    <name type="scientific">Acanthamoeba polyphaga</name>
    <name type="common">Amoeba</name>
    <dbReference type="NCBI Taxonomy" id="5757"/>
</organismHost>
<name>YL284_MIMIV</name>
<keyword id="KW-0040">ANK repeat</keyword>
<keyword id="KW-1185">Reference proteome</keyword>
<keyword id="KW-0677">Repeat</keyword>
<organism>
    <name type="scientific">Acanthamoeba polyphaga mimivirus</name>
    <name type="common">APMV</name>
    <dbReference type="NCBI Taxonomy" id="212035"/>
    <lineage>
        <taxon>Viruses</taxon>
        <taxon>Varidnaviria</taxon>
        <taxon>Bamfordvirae</taxon>
        <taxon>Nucleocytoviricota</taxon>
        <taxon>Megaviricetes</taxon>
        <taxon>Imitervirales</taxon>
        <taxon>Mimiviridae</taxon>
        <taxon>Megamimivirinae</taxon>
        <taxon>Mimivirus</taxon>
        <taxon>Mimivirus bradfordmassiliense</taxon>
    </lineage>
</organism>
<feature type="chain" id="PRO_0000249869" description="Putative ankyrin repeat protein L284">
    <location>
        <begin position="1"/>
        <end position="354"/>
    </location>
</feature>
<feature type="repeat" description="ANK 1">
    <location>
        <begin position="201"/>
        <end position="230"/>
    </location>
</feature>
<feature type="repeat" description="ANK 2">
    <location>
        <begin position="253"/>
        <end position="284"/>
    </location>
</feature>
<feature type="repeat" description="ANK 3">
    <location>
        <begin position="286"/>
        <end position="314"/>
    </location>
</feature>
<accession>Q5UPW3</accession>
<protein>
    <recommendedName>
        <fullName>Putative ankyrin repeat protein L284</fullName>
    </recommendedName>
</protein>
<gene>
    <name type="ordered locus">MIMI_L284</name>
</gene>
<sequence>MEFSNQLFMITGCPEQYHHKSLKTGLNILTKKSFDKYGGFILFEAKNIPPYYFGHYLRMVSLPSDRPDLIVYESKQSCRSNMVILGEIFLLSTQHTFIMLNDFGLDIKSISAQDRGKWYECIAGSNSDAIKGHFLFQKTCKASDEPNIIDVDDSNKKYKPEINHLDESNILKRAELLTTVTQSLSTGDAKMAGVIINKNDILDDILTLIIKSGNVSAFKTLINIIGLSNDQIFKIIESSFSHNQTKIYEFLESRYPQLYLESSIINGRTDIVDNLVKKGSNPIVVLHKAAECAQFDIIWNLSENSLINQNDIDIAMTIVKQRIHDILFYSDNPDVEKEQDILELLENIKLMRDF</sequence>
<proteinExistence type="predicted"/>